<proteinExistence type="predicted"/>
<reference evidence="6" key="1">
    <citation type="journal article" date="1998" name="Science">
        <title>Genome sequence of the nematode C. elegans: a platform for investigating biology.</title>
        <authorList>
            <consortium name="The C. elegans sequencing consortium"/>
        </authorList>
    </citation>
    <scope>NUCLEOTIDE SEQUENCE [LARGE SCALE GENOMIC DNA]</scope>
    <source>
        <strain evidence="6">Bristol N2</strain>
    </source>
</reference>
<reference evidence="4" key="2">
    <citation type="journal article" date="2020" name="Elife">
        <title>A Tudor domain protein, SIMR-1, promotes siRNA production at piRNA-targeted mRNAs in C. elegans.</title>
        <authorList>
            <person name="Manage K.I."/>
            <person name="Rogers A.K."/>
            <person name="Wallis D.C."/>
            <person name="Uebel C.J."/>
            <person name="Anderson D.C."/>
            <person name="Nguyen D.A.H."/>
            <person name="Arca K."/>
            <person name="Brown K.C."/>
            <person name="Cordeiro Rodrigues R.J."/>
            <person name="de Albuquerque B.F.M."/>
            <person name="Ketting R.F."/>
            <person name="Montgomery T.A."/>
            <person name="Phillips C.M."/>
        </authorList>
    </citation>
    <scope>SUBCELLULAR LOCATION</scope>
    <scope>DOMAIN</scope>
</reference>
<evidence type="ECO:0000256" key="1">
    <source>
        <dbReference type="SAM" id="MobiDB-lite"/>
    </source>
</evidence>
<evidence type="ECO:0000269" key="2">
    <source>
    </source>
</evidence>
<evidence type="ECO:0000303" key="3">
    <source>
    </source>
</evidence>
<evidence type="ECO:0000305" key="4"/>
<evidence type="ECO:0000305" key="5">
    <source>
    </source>
</evidence>
<evidence type="ECO:0000312" key="6">
    <source>
        <dbReference type="Proteomes" id="UP000001940"/>
    </source>
</evidence>
<evidence type="ECO:0000312" key="7">
    <source>
        <dbReference type="WormBase" id="ZK856.12"/>
    </source>
</evidence>
<keyword id="KW-0963">Cytoplasm</keyword>
<keyword id="KW-1185">Reference proteome</keyword>
<gene>
    <name evidence="7" type="primary">hpo-40</name>
    <name evidence="7" type="ORF">ZK856.12</name>
</gene>
<organism evidence="6">
    <name type="scientific">Caenorhabditis elegans</name>
    <dbReference type="NCBI Taxonomy" id="6239"/>
    <lineage>
        <taxon>Eukaryota</taxon>
        <taxon>Metazoa</taxon>
        <taxon>Ecdysozoa</taxon>
        <taxon>Nematoda</taxon>
        <taxon>Chromadorea</taxon>
        <taxon>Rhabditida</taxon>
        <taxon>Rhabditina</taxon>
        <taxon>Rhabditomorpha</taxon>
        <taxon>Rhabditoidea</taxon>
        <taxon>Rhabditidae</taxon>
        <taxon>Peloderinae</taxon>
        <taxon>Caenorhabditis</taxon>
    </lineage>
</organism>
<name>HPO40_CAEEL</name>
<feature type="chain" id="PRO_0000450824" description="Hypersensitive to pore-forming toxin protein 40">
    <location>
        <begin position="1"/>
        <end position="782"/>
    </location>
</feature>
<feature type="domain" description="Tudor; degenerate" evidence="5">
    <location>
        <begin position="138"/>
        <end position="203"/>
    </location>
</feature>
<feature type="region of interest" description="Disordered" evidence="1">
    <location>
        <begin position="332"/>
        <end position="351"/>
    </location>
</feature>
<feature type="region of interest" description="Disordered" evidence="1">
    <location>
        <begin position="413"/>
        <end position="448"/>
    </location>
</feature>
<feature type="region of interest" description="Disordered" evidence="1">
    <location>
        <begin position="472"/>
        <end position="492"/>
    </location>
</feature>
<feature type="region of interest" description="Disordered" evidence="1">
    <location>
        <begin position="617"/>
        <end position="672"/>
    </location>
</feature>
<feature type="compositionally biased region" description="Polar residues" evidence="1">
    <location>
        <begin position="332"/>
        <end position="346"/>
    </location>
</feature>
<feature type="compositionally biased region" description="Polar residues" evidence="1">
    <location>
        <begin position="413"/>
        <end position="443"/>
    </location>
</feature>
<feature type="compositionally biased region" description="Polar residues" evidence="1">
    <location>
        <begin position="617"/>
        <end position="634"/>
    </location>
</feature>
<feature type="compositionally biased region" description="Basic and acidic residues" evidence="1">
    <location>
        <begin position="638"/>
        <end position="662"/>
    </location>
</feature>
<dbReference type="EMBL" id="BX284605">
    <property type="protein sequence ID" value="CAA94860.2"/>
    <property type="molecule type" value="Genomic_DNA"/>
</dbReference>
<dbReference type="PIR" id="T28051">
    <property type="entry name" value="T28051"/>
</dbReference>
<dbReference type="RefSeq" id="NP_505628.2">
    <property type="nucleotide sequence ID" value="NM_073227.5"/>
</dbReference>
<dbReference type="FunCoup" id="Q23647">
    <property type="interactions" value="1323"/>
</dbReference>
<dbReference type="STRING" id="6239.ZK856.12.1"/>
<dbReference type="PaxDb" id="6239-ZK856.12.1"/>
<dbReference type="PeptideAtlas" id="Q23647"/>
<dbReference type="EnsemblMetazoa" id="ZK856.12.1">
    <property type="protein sequence ID" value="ZK856.12.1"/>
    <property type="gene ID" value="WBGene00014113"/>
</dbReference>
<dbReference type="GeneID" id="179421"/>
<dbReference type="KEGG" id="cel:CELE_ZK856.12"/>
<dbReference type="UCSC" id="ZK856.12">
    <property type="organism name" value="c. elegans"/>
</dbReference>
<dbReference type="AGR" id="WB:WBGene00014113"/>
<dbReference type="CTD" id="179421"/>
<dbReference type="WormBase" id="ZK856.12">
    <property type="protein sequence ID" value="CE41097"/>
    <property type="gene ID" value="WBGene00014113"/>
    <property type="gene designation" value="hpo-40"/>
</dbReference>
<dbReference type="eggNOG" id="ENOG502RT5V">
    <property type="taxonomic scope" value="Eukaryota"/>
</dbReference>
<dbReference type="GeneTree" id="ENSGT00970000196511"/>
<dbReference type="HOGENOM" id="CLU_358340_0_0_1"/>
<dbReference type="InParanoid" id="Q23647"/>
<dbReference type="OMA" id="YPCALHC"/>
<dbReference type="OrthoDB" id="5820883at2759"/>
<dbReference type="PhylomeDB" id="Q23647"/>
<dbReference type="PRO" id="PR:Q23647"/>
<dbReference type="Proteomes" id="UP000001940">
    <property type="component" value="Chromosome V"/>
</dbReference>
<dbReference type="Bgee" id="WBGene00014113">
    <property type="expression patterns" value="Expressed in adult organism and 3 other cell types or tissues"/>
</dbReference>
<dbReference type="GO" id="GO:1990633">
    <property type="term" value="C:mutator focus"/>
    <property type="evidence" value="ECO:0000314"/>
    <property type="project" value="UniProtKB"/>
</dbReference>
<dbReference type="GO" id="GO:0048471">
    <property type="term" value="C:perinuclear region of cytoplasm"/>
    <property type="evidence" value="ECO:0000314"/>
    <property type="project" value="UniProtKB"/>
</dbReference>
<sequence>MNSQQEWEHAYSLAERMYNKQAPTKREELNPTERVICSRFETIFDYDPFKDEYTFRDQALLFSTPVQPKCRTVAEADLHELKENTAKLNIPMPSYINICPIYALLPFTVLVFNNSQHAHKSLSDDMERAAATFRNPHESEIVPGAMYIFKQKHGKAYRCIILSEDGDMNIPDAERKYLVAFIDNVQIVSVKQKTLFVSDQFSIKDYPCALHCARIVGISAIRKSYVSGMNQFILNFYDAKEKRKAGMFAFIYKLDKEEKKLVIDYPSLLGTPKTTSTEIRTAVGHQIVASKDPVSLTFEQLNKKEVPEFKYLNSTDDDSDVELDLIEHDTKSVNPVASSHPTSSSMDDCPYGRASIARAKDYQLRLPPHSQKGLSSSSLLGSSYPVSNSIKNDITKQSESNRADATNISFSSFESTKSDISPQNNQNVEETSTPTVPPNSTIQENEEDEIMSPASIIRAPSRLAGSLNKVSIERPNTPLPTSSKNSEHNMSEISTYEASSISSHHLVPQSPSVPKTNYTVPVVQRPLTAPEKFRDPFGGPGSSDILNTKMLCSEKNIVPSNKFGRQISPGKDDKNENYQYSRMETKPQTLFAPVLDENQRQSSSSNMMCQIPDISSVAQGSNAPKTAPNDSVNSVAPDDIHETDKRGNHCKSVTEDPKDNKDPTAVTTLEDPDINDENFSVQSICSETFVETDQKLMEVETGADAFTESITDQFAQMSEGLKKLAINLADSVRTAAIEKNHDAFIANIHAMEIISKKVPDDIDKRFWKMKIVEARKLEAAFD</sequence>
<protein>
    <recommendedName>
        <fullName evidence="7">Hypersensitive to pore-forming toxin protein 40</fullName>
    </recommendedName>
</protein>
<accession>Q23647</accession>
<comment type="subcellular location">
    <subcellularLocation>
        <location evidence="2">Cytoplasm</location>
        <location evidence="2">Perinuclear region</location>
    </subcellularLocation>
    <text evidence="2">Localizes to perinuclear foci in germ cells (PubMed:32338603). Its localization at perinuclear foci is either adjacent to or co-localized with mutator complex protein mut-16 (PubMed:32338603).</text>
</comment>
<comment type="domain">
    <text evidence="3">Tudor domain specifically binds peptides with symmetrically dimethylated arginines (sDMA) and may facilitate protein-protein interactions.</text>
</comment>